<comment type="function">
    <text evidence="3 4">Radical enzyme that catalyzes the transformation of methylmalonyl-CoA to succinyl-CoA. Is required for growth on the polyhydroxyalkanoate degradation pathway intermediates 3-hydroxybutyrate and acetoacetate as sole carbon source.</text>
</comment>
<comment type="catalytic activity">
    <reaction evidence="3 8">
        <text>(R)-methylmalonyl-CoA = succinyl-CoA</text>
        <dbReference type="Rhea" id="RHEA:22888"/>
        <dbReference type="ChEBI" id="CHEBI:57292"/>
        <dbReference type="ChEBI" id="CHEBI:57326"/>
        <dbReference type="EC" id="5.4.99.2"/>
    </reaction>
</comment>
<comment type="cofactor">
    <cofactor evidence="3">
        <name>adenosylcob(III)alamin</name>
        <dbReference type="ChEBI" id="CHEBI:18408"/>
    </cofactor>
</comment>
<comment type="cofactor">
    <cofactor evidence="3">
        <name>a monovalent cation</name>
        <dbReference type="ChEBI" id="CHEBI:60242"/>
    </cofactor>
    <text evidence="3">Monovalent cations such as NH4(+), Rb(+), Cs(+), K(+), Li(+) or Na(+) are required for enzyme activity.</text>
</comment>
<comment type="biophysicochemical properties">
    <kinetics>
        <KM evidence="3">0.11 mM for (R,S)-methylmalonyl-CoA (in the presence of 3 mM NH4(+))</KM>
        <KM evidence="3">0.13 mM for (R,S)-methylmalonyl-CoA (in the absence of 3 mM NH4(+))</KM>
    </kinetics>
    <phDependence>
        <text evidence="3">Optimum pH is 7.0.</text>
    </phDependence>
    <temperatureDependence>
        <text evidence="3">Optimum temperature is 37 degrees Celsius.</text>
    </temperatureDependence>
</comment>
<comment type="pathway">
    <text evidence="7">Metabolic intermediate metabolism; propanoyl-CoA degradation; succinyl-CoA from propanoyl-CoA: step 3/3.</text>
</comment>
<comment type="subunit">
    <text evidence="3 8">Homodimer.</text>
</comment>
<comment type="disruption phenotype">
    <text evidence="4">Cells lacking this gene show no methylmalonyl-CoA mutase activity, in contrast to wild-type.</text>
</comment>
<comment type="similarity">
    <text evidence="7">Belongs to the methylmalonyl-CoA mutase family.</text>
</comment>
<evidence type="ECO:0000250" key="1">
    <source>
        <dbReference type="UniProtKB" id="P22033"/>
    </source>
</evidence>
<evidence type="ECO:0000255" key="2">
    <source>
        <dbReference type="PROSITE-ProRule" id="PRU00666"/>
    </source>
</evidence>
<evidence type="ECO:0000269" key="3">
    <source>
    </source>
</evidence>
<evidence type="ECO:0000269" key="4">
    <source>
    </source>
</evidence>
<evidence type="ECO:0000303" key="5">
    <source>
    </source>
</evidence>
<evidence type="ECO:0000303" key="6">
    <source>
    </source>
</evidence>
<evidence type="ECO:0000305" key="7"/>
<evidence type="ECO:0000305" key="8">
    <source>
    </source>
</evidence>
<keyword id="KW-0846">Cobalamin</keyword>
<keyword id="KW-0170">Cobalt</keyword>
<keyword id="KW-0903">Direct protein sequencing</keyword>
<keyword id="KW-0413">Isomerase</keyword>
<keyword id="KW-0479">Metal-binding</keyword>
<keyword id="KW-0614">Plasmid</keyword>
<keyword id="KW-1185">Reference proteome</keyword>
<reference key="1">
    <citation type="journal article" date="1999" name="Gene">
        <title>Methylmalonyl-CoA mutase encoding gene of Sinorhizobium meliloti.</title>
        <authorList>
            <person name="Charles T.C."/>
            <person name="Aneja P."/>
        </authorList>
    </citation>
    <scope>NUCLEOTIDE SEQUENCE [GENOMIC DNA]</scope>
    <scope>FUNCTION</scope>
    <scope>SUBUNIT</scope>
    <scope>DISRUPTION PHENOTYPE</scope>
    <source>
        <strain>SU47 / 1021</strain>
    </source>
</reference>
<reference key="2">
    <citation type="journal article" date="2001" name="Proc. Natl. Acad. Sci. U.S.A.">
        <title>The complete sequence of the 1,683-kb pSymB megaplasmid from the N2-fixing endosymbiont Sinorhizobium meliloti.</title>
        <authorList>
            <person name="Finan T.M."/>
            <person name="Weidner S."/>
            <person name="Wong K."/>
            <person name="Buhrmester J."/>
            <person name="Chain P."/>
            <person name="Vorhoelter F.J."/>
            <person name="Hernandez-Lucas I."/>
            <person name="Becker A."/>
            <person name="Cowie A."/>
            <person name="Gouzy J."/>
            <person name="Golding B."/>
            <person name="Puehler A."/>
        </authorList>
    </citation>
    <scope>NUCLEOTIDE SEQUENCE [LARGE SCALE GENOMIC DNA]</scope>
    <source>
        <strain>1021</strain>
    </source>
</reference>
<reference key="3">
    <citation type="journal article" date="2001" name="Science">
        <title>The composite genome of the legume symbiont Sinorhizobium meliloti.</title>
        <authorList>
            <person name="Galibert F."/>
            <person name="Finan T.M."/>
            <person name="Long S.R."/>
            <person name="Puehler A."/>
            <person name="Abola P."/>
            <person name="Ampe F."/>
            <person name="Barloy-Hubler F."/>
            <person name="Barnett M.J."/>
            <person name="Becker A."/>
            <person name="Boistard P."/>
            <person name="Bothe G."/>
            <person name="Boutry M."/>
            <person name="Bowser L."/>
            <person name="Buhrmester J."/>
            <person name="Cadieu E."/>
            <person name="Capela D."/>
            <person name="Chain P."/>
            <person name="Cowie A."/>
            <person name="Davis R.W."/>
            <person name="Dreano S."/>
            <person name="Federspiel N.A."/>
            <person name="Fisher R.F."/>
            <person name="Gloux S."/>
            <person name="Godrie T."/>
            <person name="Goffeau A."/>
            <person name="Golding B."/>
            <person name="Gouzy J."/>
            <person name="Gurjal M."/>
            <person name="Hernandez-Lucas I."/>
            <person name="Hong A."/>
            <person name="Huizar L."/>
            <person name="Hyman R.W."/>
            <person name="Jones T."/>
            <person name="Kahn D."/>
            <person name="Kahn M.L."/>
            <person name="Kalman S."/>
            <person name="Keating D.H."/>
            <person name="Kiss E."/>
            <person name="Komp C."/>
            <person name="Lelaure V."/>
            <person name="Masuy D."/>
            <person name="Palm C."/>
            <person name="Peck M.C."/>
            <person name="Pohl T.M."/>
            <person name="Portetelle D."/>
            <person name="Purnelle B."/>
            <person name="Ramsperger U."/>
            <person name="Surzycki R."/>
            <person name="Thebault P."/>
            <person name="Vandenbol M."/>
            <person name="Vorhoelter F.J."/>
            <person name="Weidner S."/>
            <person name="Wells D.H."/>
            <person name="Wong K."/>
            <person name="Yeh K.-C."/>
            <person name="Batut J."/>
        </authorList>
    </citation>
    <scope>NUCLEOTIDE SEQUENCE [LARGE SCALE GENOMIC DNA]</scope>
    <source>
        <strain>1021</strain>
    </source>
</reference>
<reference key="4">
    <citation type="journal article" date="2003" name="Arch. Microbiol.">
        <title>Purification and characterization of homodimeric methylmalonyl-CoA mutase from Sinorhizobium meliloti.</title>
        <authorList>
            <person name="Miyamoto E."/>
            <person name="Watanabe F."/>
            <person name="Charles T.C."/>
            <person name="Yamaji R."/>
            <person name="Inui H."/>
            <person name="Nakano Y."/>
        </authorList>
    </citation>
    <scope>PROTEIN SEQUENCE OF 2-11</scope>
    <scope>FUNCTION</scope>
    <scope>CATALYTIC ACTIVITY</scope>
    <scope>COFACTOR</scope>
    <scope>BIOPHYSICOCHEMICAL PROPERTIES</scope>
    <scope>SUBUNIT</scope>
    <source>
        <strain>1021</strain>
    </source>
</reference>
<feature type="initiator methionine" description="Removed" evidence="3">
    <location>
        <position position="1"/>
    </location>
</feature>
<feature type="chain" id="PRO_0000194274" description="Methylmalonyl-CoA mutase">
    <location>
        <begin position="2"/>
        <end position="712"/>
    </location>
</feature>
<feature type="domain" description="B12-binding" evidence="2">
    <location>
        <begin position="580"/>
        <end position="712"/>
    </location>
</feature>
<feature type="binding site" evidence="1">
    <location>
        <begin position="73"/>
        <end position="77"/>
    </location>
    <ligand>
        <name>substrate</name>
    </ligand>
</feature>
<feature type="binding site" evidence="1">
    <location>
        <begin position="183"/>
        <end position="185"/>
    </location>
    <ligand>
        <name>substrate</name>
    </ligand>
</feature>
<feature type="binding site" evidence="1">
    <location>
        <position position="195"/>
    </location>
    <ligand>
        <name>substrate</name>
    </ligand>
</feature>
<feature type="binding site" evidence="1">
    <location>
        <position position="222"/>
    </location>
    <ligand>
        <name>substrate</name>
    </ligand>
</feature>
<feature type="binding site" evidence="1">
    <location>
        <position position="232"/>
    </location>
    <ligand>
        <name>substrate</name>
    </ligand>
</feature>
<feature type="binding site" evidence="1">
    <location>
        <begin position="271"/>
        <end position="273"/>
    </location>
    <ligand>
        <name>substrate</name>
    </ligand>
</feature>
<feature type="binding site" description="axial binding residue" evidence="1">
    <location>
        <position position="593"/>
    </location>
    <ligand>
        <name>adenosylcob(III)alamin</name>
        <dbReference type="ChEBI" id="CHEBI:18408"/>
    </ligand>
    <ligandPart>
        <name>Co</name>
        <dbReference type="ChEBI" id="CHEBI:27638"/>
    </ligandPart>
</feature>
<feature type="sequence conflict" description="In Ref. 1; AAD13665." evidence="7" ref="1">
    <original>G</original>
    <variation>R</variation>
    <location>
        <position position="47"/>
    </location>
</feature>
<feature type="sequence conflict" description="In Ref. 1; AAD13665." evidence="7" ref="1">
    <original>G</original>
    <variation>R</variation>
    <location>
        <position position="61"/>
    </location>
</feature>
<feature type="sequence conflict" description="In Ref. 1; AAD13665." evidence="7" ref="1">
    <original>N</original>
    <variation>K</variation>
    <location>
        <position position="156"/>
    </location>
</feature>
<dbReference type="EC" id="5.4.99.2" evidence="3 8"/>
<dbReference type="EMBL" id="AH007335">
    <property type="protein sequence ID" value="AAD13665.1"/>
    <property type="molecule type" value="Genomic_DNA"/>
</dbReference>
<dbReference type="EMBL" id="AL591985">
    <property type="protein sequence ID" value="CAC49849.1"/>
    <property type="molecule type" value="Genomic_DNA"/>
</dbReference>
<dbReference type="PIR" id="A96023">
    <property type="entry name" value="A96023"/>
</dbReference>
<dbReference type="RefSeq" id="NP_437989.1">
    <property type="nucleotide sequence ID" value="NC_003078.1"/>
</dbReference>
<dbReference type="SMR" id="O86028"/>
<dbReference type="EnsemblBacteria" id="CAC49849">
    <property type="protein sequence ID" value="CAC49849"/>
    <property type="gene ID" value="SM_b20757"/>
</dbReference>
<dbReference type="KEGG" id="sme:SM_b20757"/>
<dbReference type="PATRIC" id="fig|266834.11.peg.6375"/>
<dbReference type="eggNOG" id="COG1884">
    <property type="taxonomic scope" value="Bacteria"/>
</dbReference>
<dbReference type="eggNOG" id="COG2185">
    <property type="taxonomic scope" value="Bacteria"/>
</dbReference>
<dbReference type="HOGENOM" id="CLU_009523_3_1_5"/>
<dbReference type="OrthoDB" id="9762378at2"/>
<dbReference type="UniPathway" id="UPA00945">
    <property type="reaction ID" value="UER00910"/>
</dbReference>
<dbReference type="Proteomes" id="UP000001976">
    <property type="component" value="Plasmid pSymB"/>
</dbReference>
<dbReference type="GO" id="GO:0005737">
    <property type="term" value="C:cytoplasm"/>
    <property type="evidence" value="ECO:0007669"/>
    <property type="project" value="TreeGrafter"/>
</dbReference>
<dbReference type="GO" id="GO:0031419">
    <property type="term" value="F:cobalamin binding"/>
    <property type="evidence" value="ECO:0007669"/>
    <property type="project" value="UniProtKB-KW"/>
</dbReference>
<dbReference type="GO" id="GO:0046872">
    <property type="term" value="F:metal ion binding"/>
    <property type="evidence" value="ECO:0007669"/>
    <property type="project" value="UniProtKB-KW"/>
</dbReference>
<dbReference type="GO" id="GO:0004494">
    <property type="term" value="F:methylmalonyl-CoA mutase activity"/>
    <property type="evidence" value="ECO:0007669"/>
    <property type="project" value="UniProtKB-EC"/>
</dbReference>
<dbReference type="GO" id="GO:0019678">
    <property type="term" value="P:propionate metabolic process, methylmalonyl pathway"/>
    <property type="evidence" value="ECO:0007669"/>
    <property type="project" value="TreeGrafter"/>
</dbReference>
<dbReference type="CDD" id="cd02071">
    <property type="entry name" value="MM_CoA_mut_B12_BD"/>
    <property type="match status" value="1"/>
</dbReference>
<dbReference type="CDD" id="cd03679">
    <property type="entry name" value="MM_CoA_mutase_alpha_like"/>
    <property type="match status" value="1"/>
</dbReference>
<dbReference type="FunFam" id="3.20.20.240:FF:000001">
    <property type="entry name" value="Probable methylmalonyl-coa mutase"/>
    <property type="match status" value="1"/>
</dbReference>
<dbReference type="Gene3D" id="3.40.50.280">
    <property type="entry name" value="Cobalamin-binding domain"/>
    <property type="match status" value="1"/>
</dbReference>
<dbReference type="Gene3D" id="3.20.20.240">
    <property type="entry name" value="Methylmalonyl-CoA mutase"/>
    <property type="match status" value="1"/>
</dbReference>
<dbReference type="InterPro" id="IPR006159">
    <property type="entry name" value="Acid_CoA_mut_C"/>
</dbReference>
<dbReference type="InterPro" id="IPR016176">
    <property type="entry name" value="Cbl-dep_enz_cat"/>
</dbReference>
<dbReference type="InterPro" id="IPR006158">
    <property type="entry name" value="Cobalamin-bd"/>
</dbReference>
<dbReference type="InterPro" id="IPR036724">
    <property type="entry name" value="Cobalamin-bd_sf"/>
</dbReference>
<dbReference type="InterPro" id="IPR006099">
    <property type="entry name" value="MeMalonylCoA_mutase_a/b_cat"/>
</dbReference>
<dbReference type="InterPro" id="IPR006098">
    <property type="entry name" value="MMCoA_mutase_a_cat"/>
</dbReference>
<dbReference type="NCBIfam" id="TIGR00640">
    <property type="entry name" value="acid_CoA_mut_C"/>
    <property type="match status" value="1"/>
</dbReference>
<dbReference type="NCBIfam" id="TIGR00641">
    <property type="entry name" value="acid_CoA_mut_N"/>
    <property type="match status" value="1"/>
</dbReference>
<dbReference type="NCBIfam" id="NF006944">
    <property type="entry name" value="PRK09426.1"/>
    <property type="match status" value="1"/>
</dbReference>
<dbReference type="PANTHER" id="PTHR48101:SF4">
    <property type="entry name" value="METHYLMALONYL-COA MUTASE, MITOCHONDRIAL"/>
    <property type="match status" value="1"/>
</dbReference>
<dbReference type="PANTHER" id="PTHR48101">
    <property type="entry name" value="METHYLMALONYL-COA MUTASE, MITOCHONDRIAL-RELATED"/>
    <property type="match status" value="1"/>
</dbReference>
<dbReference type="Pfam" id="PF02310">
    <property type="entry name" value="B12-binding"/>
    <property type="match status" value="1"/>
</dbReference>
<dbReference type="Pfam" id="PF01642">
    <property type="entry name" value="MM_CoA_mutase"/>
    <property type="match status" value="1"/>
</dbReference>
<dbReference type="SUPFAM" id="SSF52242">
    <property type="entry name" value="Cobalamin (vitamin B12)-binding domain"/>
    <property type="match status" value="1"/>
</dbReference>
<dbReference type="SUPFAM" id="SSF51703">
    <property type="entry name" value="Cobalamin (vitamin B12)-dependent enzymes"/>
    <property type="match status" value="1"/>
</dbReference>
<dbReference type="PROSITE" id="PS51332">
    <property type="entry name" value="B12_BINDING"/>
    <property type="match status" value="1"/>
</dbReference>
<dbReference type="PROSITE" id="PS00544">
    <property type="entry name" value="METMALONYL_COA_MUTASE"/>
    <property type="match status" value="1"/>
</dbReference>
<protein>
    <recommendedName>
        <fullName evidence="5 6">Methylmalonyl-CoA mutase</fullName>
        <shortName evidence="5">MCM</shortName>
        <ecNumber evidence="3 8">5.4.99.2</ecNumber>
    </recommendedName>
</protein>
<name>MCM_RHIME</name>
<gene>
    <name evidence="6" type="primary">bhbA</name>
    <name type="ordered locus">RB1449</name>
    <name type="ORF">SMb20757</name>
</gene>
<proteinExistence type="evidence at protein level"/>
<geneLocation type="plasmid">
    <name>pSymB</name>
    <name>megaplasmid 2</name>
</geneLocation>
<accession>O86028</accession>
<organism>
    <name type="scientific">Rhizobium meliloti (strain 1021)</name>
    <name type="common">Ensifer meliloti</name>
    <name type="synonym">Sinorhizobium meliloti</name>
    <dbReference type="NCBI Taxonomy" id="266834"/>
    <lineage>
        <taxon>Bacteria</taxon>
        <taxon>Pseudomonadati</taxon>
        <taxon>Pseudomonadota</taxon>
        <taxon>Alphaproteobacteria</taxon>
        <taxon>Hyphomicrobiales</taxon>
        <taxon>Rhizobiaceae</taxon>
        <taxon>Sinorhizobium/Ensifer group</taxon>
        <taxon>Sinorhizobium</taxon>
    </lineage>
</organism>
<sequence>MTEKTIKDWEALAEKELRVSPEGLVWHTPEGIDVKPLYTSDDMSGIGHLNSLPGFEPFVRGPRATMYAGRPWTVRQYAGFSTAEASNAFYRRNLAAGQQGVSVAFDLATHRGYDSDHPRVQGDVGKAGVAIDSVEDMKILFDGIPLDRISVSMTMNGAVIPILASFIVAGEEQGVSRDKLSGTIQNDILKEFMVRNTYIYPPEPSMRIVADIIEYTAKEMPKFNSISISGYHMQEAGATLVQELAFTLADGREYVRAALAKGLNVDDFAGRLSFFFAIGMNFFMEAAKLRAARLLWTRIMQEFKPEKASSLMLRTHCQTSGVSLQEQDPYNNIVRTAFEAMSAVLGGTQSLHTNSFDEAMALPTDFSARIARNTQLILQHETGVTKVVDPLAGSYYVESLTNELAEKAWGLIEEVEALGGMTKAVNAGLPKRLIEEAATRRQAAVDRAEEVIVGVNKYRLENEQPIDILQIDNAAVRTAQVKRIEETRRRRDSQKMKQALDALADVARSGKGNLLAAAVEAARARATVGEITDAMREAFGDYTAIPEVVTDIYGKAYEGDPELGVLAGRLGEATKRLGHKPKIMVAKLGQDGHDRGAKVIASAFGDIGFDVVAGPLFQTPEEAADLALAEEVTVIGVSSLAAGHRTLMPQLAEALKKRGGEDIIVVCGGVIPRQDYDYLMENGVAAVFGPGTQVLDAARAVLDLIEGKRRNV</sequence>